<sequence length="323" mass="34419">MVSVNLEAKKTVDVMIEKQDELNIAVSQLSNGATIIDCGVNVDGSFKAGELYTKVCLGGLADVGISIPGDLSEKFALPSVKIKTDSPAISTLGSQKAGWSVSVGDFFALGSGPARAICKKPAETYEEIGYEDTEADLAILTLEADVLPGEDVAQYIADECNVDVKDVYLLVAPTSSLVGSIQISGRVVENGTYKMLEAIKFDVTKVKHAAGIAPIAPIDPDGLKAMGKTNDAVLFGGRTYYYVESDENDDIADVAAKLPSSAADGYGKPFFDVFKEAEFDFYKIDKGMFAPAEVVINDLTTGKIYKEGYVNVDLLKKSFGVDN</sequence>
<evidence type="ECO:0000255" key="1">
    <source>
        <dbReference type="HAMAP-Rule" id="MF_00486"/>
    </source>
</evidence>
<comment type="function">
    <text evidence="1">Catalyzes the reversible interconversion of 5-formyl-H(4)MPT to methenyl-H(4)MPT(+).</text>
</comment>
<comment type="catalytic activity">
    <reaction evidence="1">
        <text>5,10-methenyl-5,6,7,8-tetrahydromethanopterin + H2O = N(5)-formyl-5,6,7,8-tetrahydromethanopterin + H(+)</text>
        <dbReference type="Rhea" id="RHEA:19053"/>
        <dbReference type="ChEBI" id="CHEBI:15377"/>
        <dbReference type="ChEBI" id="CHEBI:15378"/>
        <dbReference type="ChEBI" id="CHEBI:58018"/>
        <dbReference type="ChEBI" id="CHEBI:58337"/>
        <dbReference type="EC" id="3.5.4.27"/>
    </reaction>
</comment>
<comment type="pathway">
    <text evidence="1">One-carbon metabolism; methanogenesis from CO(2); 5,10-methenyl-5,6,7,8-tetrahydromethanopterin from CO(2): step 3/3.</text>
</comment>
<comment type="subcellular location">
    <subcellularLocation>
        <location evidence="1">Cytoplasm</location>
    </subcellularLocation>
</comment>
<comment type="similarity">
    <text evidence="1">Belongs to the MCH family.</text>
</comment>
<accession>A5UP00</accession>
<dbReference type="EC" id="3.5.4.27" evidence="1"/>
<dbReference type="EMBL" id="CP000678">
    <property type="protein sequence ID" value="ABQ87928.1"/>
    <property type="molecule type" value="Genomic_DNA"/>
</dbReference>
<dbReference type="RefSeq" id="WP_004035167.1">
    <property type="nucleotide sequence ID" value="NZ_CP117965.1"/>
</dbReference>
<dbReference type="SMR" id="A5UP00"/>
<dbReference type="STRING" id="420247.Msm_1723"/>
<dbReference type="EnsemblBacteria" id="ABQ87928">
    <property type="protein sequence ID" value="ABQ87928"/>
    <property type="gene ID" value="Msm_1723"/>
</dbReference>
<dbReference type="GeneID" id="78818365"/>
<dbReference type="KEGG" id="msi:Msm_1723"/>
<dbReference type="PATRIC" id="fig|420247.28.peg.1712"/>
<dbReference type="eggNOG" id="arCOG02675">
    <property type="taxonomic scope" value="Archaea"/>
</dbReference>
<dbReference type="HOGENOM" id="CLU_876031_0_0_2"/>
<dbReference type="UniPathway" id="UPA00640">
    <property type="reaction ID" value="UER00694"/>
</dbReference>
<dbReference type="Proteomes" id="UP000001992">
    <property type="component" value="Chromosome"/>
</dbReference>
<dbReference type="GO" id="GO:0005737">
    <property type="term" value="C:cytoplasm"/>
    <property type="evidence" value="ECO:0007669"/>
    <property type="project" value="UniProtKB-SubCell"/>
</dbReference>
<dbReference type="GO" id="GO:0018759">
    <property type="term" value="F:methenyltetrahydromethanopterin cyclohydrolase activity"/>
    <property type="evidence" value="ECO:0007669"/>
    <property type="project" value="UniProtKB-UniRule"/>
</dbReference>
<dbReference type="GO" id="GO:0019386">
    <property type="term" value="P:methanogenesis, from carbon dioxide"/>
    <property type="evidence" value="ECO:0007669"/>
    <property type="project" value="UniProtKB-UniRule"/>
</dbReference>
<dbReference type="GO" id="GO:0006730">
    <property type="term" value="P:one-carbon metabolic process"/>
    <property type="evidence" value="ECO:0007669"/>
    <property type="project" value="UniProtKB-UniRule"/>
</dbReference>
<dbReference type="CDD" id="cd00545">
    <property type="entry name" value="MCH"/>
    <property type="match status" value="1"/>
</dbReference>
<dbReference type="Gene3D" id="3.10.340.11">
    <property type="entry name" value="Methenyltetrahydromethanopterin Cyclohydrolase, Chain A, domain 1"/>
    <property type="match status" value="1"/>
</dbReference>
<dbReference type="Gene3D" id="3.30.1030.10">
    <property type="entry name" value="Methenyltetrahydromethanopterin Cyclohydrolase, Chain A, domain 2"/>
    <property type="match status" value="1"/>
</dbReference>
<dbReference type="HAMAP" id="MF_00486">
    <property type="entry name" value="McH"/>
    <property type="match status" value="1"/>
</dbReference>
<dbReference type="InterPro" id="IPR003209">
    <property type="entry name" value="METHMP_CycHdrlase"/>
</dbReference>
<dbReference type="NCBIfam" id="TIGR03120">
    <property type="entry name" value="one_C_mch"/>
    <property type="match status" value="1"/>
</dbReference>
<dbReference type="Pfam" id="PF02289">
    <property type="entry name" value="MCH"/>
    <property type="match status" value="1"/>
</dbReference>
<dbReference type="SUPFAM" id="SSF56199">
    <property type="entry name" value="Methenyltetrahydromethanopterin cyclohydrolase"/>
    <property type="match status" value="1"/>
</dbReference>
<organism>
    <name type="scientific">Methanobrevibacter smithii (strain ATCC 35061 / DSM 861 / OCM 144 / PS)</name>
    <dbReference type="NCBI Taxonomy" id="420247"/>
    <lineage>
        <taxon>Archaea</taxon>
        <taxon>Methanobacteriati</taxon>
        <taxon>Methanobacteriota</taxon>
        <taxon>Methanomada group</taxon>
        <taxon>Methanobacteria</taxon>
        <taxon>Methanobacteriales</taxon>
        <taxon>Methanobacteriaceae</taxon>
        <taxon>Methanobrevibacter</taxon>
    </lineage>
</organism>
<keyword id="KW-0963">Cytoplasm</keyword>
<keyword id="KW-0378">Hydrolase</keyword>
<keyword id="KW-0484">Methanogenesis</keyword>
<keyword id="KW-0554">One-carbon metabolism</keyword>
<protein>
    <recommendedName>
        <fullName evidence="1">Methenyltetrahydromethanopterin cyclohydrolase</fullName>
        <ecNumber evidence="1">3.5.4.27</ecNumber>
    </recommendedName>
    <alternativeName>
        <fullName evidence="1">Methenyl-H4MPT cyclohydrolase</fullName>
    </alternativeName>
</protein>
<proteinExistence type="inferred from homology"/>
<gene>
    <name evidence="1" type="primary">mch</name>
    <name type="ordered locus">Msm_1723</name>
</gene>
<reference key="1">
    <citation type="journal article" date="2007" name="Proc. Natl. Acad. Sci. U.S.A.">
        <title>Genomic and metabolic adaptations of Methanobrevibacter smithii to the human gut.</title>
        <authorList>
            <person name="Samuel B.S."/>
            <person name="Hansen E.E."/>
            <person name="Manchester J.K."/>
            <person name="Coutinho P.M."/>
            <person name="Henrissat B."/>
            <person name="Fulton R."/>
            <person name="Latreille P."/>
            <person name="Kim K."/>
            <person name="Wilson R.K."/>
            <person name="Gordon J.I."/>
        </authorList>
    </citation>
    <scope>NUCLEOTIDE SEQUENCE [LARGE SCALE GENOMIC DNA]</scope>
    <source>
        <strain>ATCC 35061 / DSM 861 / OCM 144 / PS</strain>
    </source>
</reference>
<name>MCH_METS3</name>
<feature type="chain" id="PRO_1000014404" description="Methenyltetrahydromethanopterin cyclohydrolase">
    <location>
        <begin position="1"/>
        <end position="323"/>
    </location>
</feature>